<dbReference type="EMBL" id="AK006303">
    <property type="protein sequence ID" value="BAB24516.2"/>
    <property type="status" value="ALT_INIT"/>
    <property type="molecule type" value="mRNA"/>
</dbReference>
<dbReference type="EMBL" id="AK007769">
    <property type="protein sequence ID" value="BAB25244.1"/>
    <property type="molecule type" value="mRNA"/>
</dbReference>
<dbReference type="EMBL" id="AK008200">
    <property type="protein sequence ID" value="BAB25528.1"/>
    <property type="molecule type" value="mRNA"/>
</dbReference>
<dbReference type="EMBL" id="AK013310">
    <property type="protein sequence ID" value="BAB28784.1"/>
    <property type="molecule type" value="mRNA"/>
</dbReference>
<dbReference type="EMBL" id="BC027505">
    <property type="protein sequence ID" value="AAH27505.1"/>
    <property type="molecule type" value="mRNA"/>
</dbReference>
<dbReference type="RefSeq" id="NP_001314789.1">
    <property type="nucleotide sequence ID" value="NM_001327860.1"/>
</dbReference>
<dbReference type="RefSeq" id="NP_079840.2">
    <property type="nucleotide sequence ID" value="NM_025564.2"/>
</dbReference>
<dbReference type="SMR" id="Q9CQL1"/>
<dbReference type="BioGRID" id="211476">
    <property type="interactions" value="1"/>
</dbReference>
<dbReference type="ComplexPortal" id="CPX-681">
    <property type="entry name" value="Exon junction subcomplex Magohb-Y14"/>
</dbReference>
<dbReference type="ComplexPortal" id="CPX-683">
    <property type="entry name" value="Exon junction core complex, Magohb variant"/>
</dbReference>
<dbReference type="FunCoup" id="Q9CQL1">
    <property type="interactions" value="3288"/>
</dbReference>
<dbReference type="IntAct" id="Q9CQL1">
    <property type="interactions" value="2"/>
</dbReference>
<dbReference type="STRING" id="10090.ENSMUSP00000032307"/>
<dbReference type="GlyGen" id="Q9CQL1">
    <property type="glycosylation" value="1 site, 1 O-linked glycan (1 site)"/>
</dbReference>
<dbReference type="iPTMnet" id="Q9CQL1"/>
<dbReference type="PhosphoSitePlus" id="Q9CQL1"/>
<dbReference type="jPOST" id="Q9CQL1"/>
<dbReference type="PaxDb" id="10090-ENSMUSP00000032307"/>
<dbReference type="PeptideAtlas" id="Q9CQL1"/>
<dbReference type="ProteomicsDB" id="293469"/>
<dbReference type="Pumba" id="Q9CQL1"/>
<dbReference type="DNASU" id="66441"/>
<dbReference type="GeneID" id="66441"/>
<dbReference type="KEGG" id="mmu:66441"/>
<dbReference type="AGR" id="MGI:1913691"/>
<dbReference type="CTD" id="55110"/>
<dbReference type="MGI" id="MGI:1913691">
    <property type="gene designation" value="Magohb"/>
</dbReference>
<dbReference type="eggNOG" id="KOG3392">
    <property type="taxonomic scope" value="Eukaryota"/>
</dbReference>
<dbReference type="InParanoid" id="Q9CQL1"/>
<dbReference type="OrthoDB" id="9547621at2759"/>
<dbReference type="PhylomeDB" id="Q9CQL1"/>
<dbReference type="TreeFam" id="TF300128"/>
<dbReference type="BioGRID-ORCS" id="66441">
    <property type="hits" value="4 hits in 80 CRISPR screens"/>
</dbReference>
<dbReference type="CD-CODE" id="DE1E139C">
    <property type="entry name" value="Chromatoid body"/>
</dbReference>
<dbReference type="ChiTaRS" id="Magohb">
    <property type="organism name" value="mouse"/>
</dbReference>
<dbReference type="PRO" id="PR:Q9CQL1"/>
<dbReference type="Proteomes" id="UP000000589">
    <property type="component" value="Unplaced"/>
</dbReference>
<dbReference type="RNAct" id="Q9CQL1">
    <property type="molecule type" value="protein"/>
</dbReference>
<dbReference type="GO" id="GO:0005829">
    <property type="term" value="C:cytosol"/>
    <property type="evidence" value="ECO:0000303"/>
    <property type="project" value="ComplexPortal"/>
</dbReference>
<dbReference type="GO" id="GO:0035145">
    <property type="term" value="C:exon-exon junction complex"/>
    <property type="evidence" value="ECO:0000250"/>
    <property type="project" value="ComplexPortal"/>
</dbReference>
<dbReference type="GO" id="GO:1990501">
    <property type="term" value="C:exon-exon junction subcomplex mago-y14"/>
    <property type="evidence" value="ECO:0000266"/>
    <property type="project" value="ComplexPortal"/>
</dbReference>
<dbReference type="GO" id="GO:0005634">
    <property type="term" value="C:nucleus"/>
    <property type="evidence" value="ECO:0000250"/>
    <property type="project" value="UniProtKB"/>
</dbReference>
<dbReference type="GO" id="GO:0071006">
    <property type="term" value="C:U2-type catalytic step 1 spliceosome"/>
    <property type="evidence" value="ECO:0000250"/>
    <property type="project" value="UniProtKB"/>
</dbReference>
<dbReference type="GO" id="GO:0071005">
    <property type="term" value="C:U2-type precatalytic spliceosome"/>
    <property type="evidence" value="ECO:0000250"/>
    <property type="project" value="UniProtKB"/>
</dbReference>
<dbReference type="GO" id="GO:0003723">
    <property type="term" value="F:RNA binding"/>
    <property type="evidence" value="ECO:0007669"/>
    <property type="project" value="UniProtKB-KW"/>
</dbReference>
<dbReference type="GO" id="GO:0006406">
    <property type="term" value="P:mRNA export from nucleus"/>
    <property type="evidence" value="ECO:0000303"/>
    <property type="project" value="ComplexPortal"/>
</dbReference>
<dbReference type="GO" id="GO:0000398">
    <property type="term" value="P:mRNA splicing, via spliceosome"/>
    <property type="evidence" value="ECO:0000250"/>
    <property type="project" value="UniProtKB"/>
</dbReference>
<dbReference type="GO" id="GO:0050684">
    <property type="term" value="P:regulation of mRNA processing"/>
    <property type="evidence" value="ECO:0000250"/>
    <property type="project" value="ComplexPortal"/>
</dbReference>
<dbReference type="GO" id="GO:2000622">
    <property type="term" value="P:regulation of nuclear-transcribed mRNA catabolic process, nonsense-mediated decay"/>
    <property type="evidence" value="ECO:0000250"/>
    <property type="project" value="ComplexPortal"/>
</dbReference>
<dbReference type="CDD" id="cd11295">
    <property type="entry name" value="Mago_nashi"/>
    <property type="match status" value="1"/>
</dbReference>
<dbReference type="FunFam" id="3.30.1560.10:FF:000001">
    <property type="entry name" value="Protein mago nashi homolog"/>
    <property type="match status" value="1"/>
</dbReference>
<dbReference type="Gene3D" id="3.30.1560.10">
    <property type="entry name" value="Mago nashi"/>
    <property type="match status" value="1"/>
</dbReference>
<dbReference type="InterPro" id="IPR004023">
    <property type="entry name" value="Mago_nashi"/>
</dbReference>
<dbReference type="InterPro" id="IPR036605">
    <property type="entry name" value="Mago_nashi_sf"/>
</dbReference>
<dbReference type="PANTHER" id="PTHR12638:SF0">
    <property type="entry name" value="MAGO HOMOLOG, EXON JUNCTION COMPLEX SUBUNIT-RELATED"/>
    <property type="match status" value="1"/>
</dbReference>
<dbReference type="PANTHER" id="PTHR12638">
    <property type="entry name" value="PROTEIN MAGO NASHI HOMOLOG"/>
    <property type="match status" value="1"/>
</dbReference>
<dbReference type="Pfam" id="PF02792">
    <property type="entry name" value="Mago_nashi"/>
    <property type="match status" value="1"/>
</dbReference>
<dbReference type="SUPFAM" id="SSF89817">
    <property type="entry name" value="Mago nashi protein"/>
    <property type="match status" value="1"/>
</dbReference>
<accession>Q9CQL1</accession>
<accession>Q78Y23</accession>
<name>MGN2_MOUSE</name>
<proteinExistence type="evidence at transcript level"/>
<evidence type="ECO:0000250" key="1">
    <source>
        <dbReference type="UniProtKB" id="Q96A72"/>
    </source>
</evidence>
<evidence type="ECO:0000269" key="2">
    <source>
    </source>
</evidence>
<evidence type="ECO:0000305" key="3"/>
<organism>
    <name type="scientific">Mus musculus</name>
    <name type="common">Mouse</name>
    <dbReference type="NCBI Taxonomy" id="10090"/>
    <lineage>
        <taxon>Eukaryota</taxon>
        <taxon>Metazoa</taxon>
        <taxon>Chordata</taxon>
        <taxon>Craniata</taxon>
        <taxon>Vertebrata</taxon>
        <taxon>Euteleostomi</taxon>
        <taxon>Mammalia</taxon>
        <taxon>Eutheria</taxon>
        <taxon>Euarchontoglires</taxon>
        <taxon>Glires</taxon>
        <taxon>Rodentia</taxon>
        <taxon>Myomorpha</taxon>
        <taxon>Muroidea</taxon>
        <taxon>Muridae</taxon>
        <taxon>Murinae</taxon>
        <taxon>Mus</taxon>
        <taxon>Mus</taxon>
    </lineage>
</organism>
<gene>
    <name type="primary">Magohb</name>
    <name type="synonym">Magoh-rs1</name>
    <name type="synonym">Magoh2</name>
</gene>
<sequence>MGSDFYLRYYVGHKGKFGHEFLEFEFRPDGKLRYANNSNYKNDVMIRKEAYVHKSVMEELKRIIDDSEITKEDDALWPPPDRVGRQELEIVIGDEHISFTTSKIGSLIDVNQSKDPEGLRVFYYLVQDLKCLVFSLIGLHFKIKPI</sequence>
<protein>
    <recommendedName>
        <fullName>Protein mago nashi homolog 2</fullName>
    </recommendedName>
</protein>
<feature type="chain" id="PRO_0000174148" description="Protein mago nashi homolog 2">
    <location>
        <begin position="1"/>
        <end position="146"/>
    </location>
</feature>
<keyword id="KW-0507">mRNA processing</keyword>
<keyword id="KW-0508">mRNA splicing</keyword>
<keyword id="KW-0509">mRNA transport</keyword>
<keyword id="KW-0539">Nucleus</keyword>
<keyword id="KW-1185">Reference proteome</keyword>
<keyword id="KW-0694">RNA-binding</keyword>
<keyword id="KW-0747">Spliceosome</keyword>
<keyword id="KW-0813">Transport</keyword>
<reference key="1">
    <citation type="journal article" date="2005" name="Science">
        <title>The transcriptional landscape of the mammalian genome.</title>
        <authorList>
            <person name="Carninci P."/>
            <person name="Kasukawa T."/>
            <person name="Katayama S."/>
            <person name="Gough J."/>
            <person name="Frith M.C."/>
            <person name="Maeda N."/>
            <person name="Oyama R."/>
            <person name="Ravasi T."/>
            <person name="Lenhard B."/>
            <person name="Wells C."/>
            <person name="Kodzius R."/>
            <person name="Shimokawa K."/>
            <person name="Bajic V.B."/>
            <person name="Brenner S.E."/>
            <person name="Batalov S."/>
            <person name="Forrest A.R."/>
            <person name="Zavolan M."/>
            <person name="Davis M.J."/>
            <person name="Wilming L.G."/>
            <person name="Aidinis V."/>
            <person name="Allen J.E."/>
            <person name="Ambesi-Impiombato A."/>
            <person name="Apweiler R."/>
            <person name="Aturaliya R.N."/>
            <person name="Bailey T.L."/>
            <person name="Bansal M."/>
            <person name="Baxter L."/>
            <person name="Beisel K.W."/>
            <person name="Bersano T."/>
            <person name="Bono H."/>
            <person name="Chalk A.M."/>
            <person name="Chiu K.P."/>
            <person name="Choudhary V."/>
            <person name="Christoffels A."/>
            <person name="Clutterbuck D.R."/>
            <person name="Crowe M.L."/>
            <person name="Dalla E."/>
            <person name="Dalrymple B.P."/>
            <person name="de Bono B."/>
            <person name="Della Gatta G."/>
            <person name="di Bernardo D."/>
            <person name="Down T."/>
            <person name="Engstrom P."/>
            <person name="Fagiolini M."/>
            <person name="Faulkner G."/>
            <person name="Fletcher C.F."/>
            <person name="Fukushima T."/>
            <person name="Furuno M."/>
            <person name="Futaki S."/>
            <person name="Gariboldi M."/>
            <person name="Georgii-Hemming P."/>
            <person name="Gingeras T.R."/>
            <person name="Gojobori T."/>
            <person name="Green R.E."/>
            <person name="Gustincich S."/>
            <person name="Harbers M."/>
            <person name="Hayashi Y."/>
            <person name="Hensch T.K."/>
            <person name="Hirokawa N."/>
            <person name="Hill D."/>
            <person name="Huminiecki L."/>
            <person name="Iacono M."/>
            <person name="Ikeo K."/>
            <person name="Iwama A."/>
            <person name="Ishikawa T."/>
            <person name="Jakt M."/>
            <person name="Kanapin A."/>
            <person name="Katoh M."/>
            <person name="Kawasawa Y."/>
            <person name="Kelso J."/>
            <person name="Kitamura H."/>
            <person name="Kitano H."/>
            <person name="Kollias G."/>
            <person name="Krishnan S.P."/>
            <person name="Kruger A."/>
            <person name="Kummerfeld S.K."/>
            <person name="Kurochkin I.V."/>
            <person name="Lareau L.F."/>
            <person name="Lazarevic D."/>
            <person name="Lipovich L."/>
            <person name="Liu J."/>
            <person name="Liuni S."/>
            <person name="McWilliam S."/>
            <person name="Madan Babu M."/>
            <person name="Madera M."/>
            <person name="Marchionni L."/>
            <person name="Matsuda H."/>
            <person name="Matsuzawa S."/>
            <person name="Miki H."/>
            <person name="Mignone F."/>
            <person name="Miyake S."/>
            <person name="Morris K."/>
            <person name="Mottagui-Tabar S."/>
            <person name="Mulder N."/>
            <person name="Nakano N."/>
            <person name="Nakauchi H."/>
            <person name="Ng P."/>
            <person name="Nilsson R."/>
            <person name="Nishiguchi S."/>
            <person name="Nishikawa S."/>
            <person name="Nori F."/>
            <person name="Ohara O."/>
            <person name="Okazaki Y."/>
            <person name="Orlando V."/>
            <person name="Pang K.C."/>
            <person name="Pavan W.J."/>
            <person name="Pavesi G."/>
            <person name="Pesole G."/>
            <person name="Petrovsky N."/>
            <person name="Piazza S."/>
            <person name="Reed J."/>
            <person name="Reid J.F."/>
            <person name="Ring B.Z."/>
            <person name="Ringwald M."/>
            <person name="Rost B."/>
            <person name="Ruan Y."/>
            <person name="Salzberg S.L."/>
            <person name="Sandelin A."/>
            <person name="Schneider C."/>
            <person name="Schoenbach C."/>
            <person name="Sekiguchi K."/>
            <person name="Semple C.A."/>
            <person name="Seno S."/>
            <person name="Sessa L."/>
            <person name="Sheng Y."/>
            <person name="Shibata Y."/>
            <person name="Shimada H."/>
            <person name="Shimada K."/>
            <person name="Silva D."/>
            <person name="Sinclair B."/>
            <person name="Sperling S."/>
            <person name="Stupka E."/>
            <person name="Sugiura K."/>
            <person name="Sultana R."/>
            <person name="Takenaka Y."/>
            <person name="Taki K."/>
            <person name="Tammoja K."/>
            <person name="Tan S.L."/>
            <person name="Tang S."/>
            <person name="Taylor M.S."/>
            <person name="Tegner J."/>
            <person name="Teichmann S.A."/>
            <person name="Ueda H.R."/>
            <person name="van Nimwegen E."/>
            <person name="Verardo R."/>
            <person name="Wei C.L."/>
            <person name="Yagi K."/>
            <person name="Yamanishi H."/>
            <person name="Zabarovsky E."/>
            <person name="Zhu S."/>
            <person name="Zimmer A."/>
            <person name="Hide W."/>
            <person name="Bult C."/>
            <person name="Grimmond S.M."/>
            <person name="Teasdale R.D."/>
            <person name="Liu E.T."/>
            <person name="Brusic V."/>
            <person name="Quackenbush J."/>
            <person name="Wahlestedt C."/>
            <person name="Mattick J.S."/>
            <person name="Hume D.A."/>
            <person name="Kai C."/>
            <person name="Sasaki D."/>
            <person name="Tomaru Y."/>
            <person name="Fukuda S."/>
            <person name="Kanamori-Katayama M."/>
            <person name="Suzuki M."/>
            <person name="Aoki J."/>
            <person name="Arakawa T."/>
            <person name="Iida J."/>
            <person name="Imamura K."/>
            <person name="Itoh M."/>
            <person name="Kato T."/>
            <person name="Kawaji H."/>
            <person name="Kawagashira N."/>
            <person name="Kawashima T."/>
            <person name="Kojima M."/>
            <person name="Kondo S."/>
            <person name="Konno H."/>
            <person name="Nakano K."/>
            <person name="Ninomiya N."/>
            <person name="Nishio T."/>
            <person name="Okada M."/>
            <person name="Plessy C."/>
            <person name="Shibata K."/>
            <person name="Shiraki T."/>
            <person name="Suzuki S."/>
            <person name="Tagami M."/>
            <person name="Waki K."/>
            <person name="Watahiki A."/>
            <person name="Okamura-Oho Y."/>
            <person name="Suzuki H."/>
            <person name="Kawai J."/>
            <person name="Hayashizaki Y."/>
        </authorList>
    </citation>
    <scope>NUCLEOTIDE SEQUENCE [LARGE SCALE MRNA]</scope>
    <source>
        <strain>C57BL/6J</strain>
        <tissue>Pancreas</tissue>
        <tissue>Small intestine</tissue>
        <tissue>Testis</tissue>
    </source>
</reference>
<reference key="2">
    <citation type="journal article" date="2004" name="Genome Res.">
        <title>The status, quality, and expansion of the NIH full-length cDNA project: the Mammalian Gene Collection (MGC).</title>
        <authorList>
            <consortium name="The MGC Project Team"/>
        </authorList>
    </citation>
    <scope>NUCLEOTIDE SEQUENCE [LARGE SCALE MRNA]</scope>
    <source>
        <tissue>Mammary gland</tissue>
    </source>
</reference>
<reference key="3">
    <citation type="journal article" date="2013" name="RNA Biol.">
        <title>Two mammalian MAGOH genes contribute to exon junction complex composition and nonsense-mediated decay.</title>
        <authorList>
            <person name="Singh K.K."/>
            <person name="Wachsmuth L."/>
            <person name="Kulozik A.E."/>
            <person name="Gehring N.H."/>
        </authorList>
    </citation>
    <scope>TISSUE SPECIFICITY</scope>
    <scope>INDUCTION BY LIPOPOLYSACCHARIDE</scope>
</reference>
<comment type="function">
    <text evidence="1">Required for pre-mRNA splicing as component of the spliceosome. Plays a redundant role with MAGOH in the exon junction complex and in the nonsense-mediated decay (NMD) pathway.</text>
</comment>
<comment type="subunit">
    <text evidence="1">Component of the pre-catalytic, catalytic and post-catalytic spliceosome complexes. Heterodimer with RBM8A. Core component of the mRNA splicing-dependent exon junction complex (EJC); the core complex contains CASC3, EIF4A3, MAGOH or MAGOHB, and RBM8A.</text>
</comment>
<comment type="subcellular location">
    <subcellularLocation>
        <location evidence="1">Nucleus</location>
    </subcellularLocation>
</comment>
<comment type="tissue specificity">
    <text evidence="2">Ubiquitous. Detected in brain, heart, liver, lung, spleen and testis.</text>
</comment>
<comment type="induction">
    <text evidence="2">In macrophages, strongly induced by bacterial lipopolysaccharide (LPS). Levels reach a maximum 6 hours after exposure to LPS and are lower, but still much increased after 12 and 24 hours.</text>
</comment>
<comment type="similarity">
    <text evidence="3">Belongs to the mago nashi family.</text>
</comment>
<comment type="sequence caution" evidence="3">
    <conflict type="erroneous initiation">
        <sequence resource="EMBL-CDS" id="BAB24516"/>
    </conflict>
    <text>Extended N-terminus.</text>
</comment>